<organism>
    <name type="scientific">Rhodopseudomonas palustris (strain TIE-1)</name>
    <dbReference type="NCBI Taxonomy" id="395960"/>
    <lineage>
        <taxon>Bacteria</taxon>
        <taxon>Pseudomonadati</taxon>
        <taxon>Pseudomonadota</taxon>
        <taxon>Alphaproteobacteria</taxon>
        <taxon>Hyphomicrobiales</taxon>
        <taxon>Nitrobacteraceae</taxon>
        <taxon>Rhodopseudomonas</taxon>
    </lineage>
</organism>
<evidence type="ECO:0000255" key="1">
    <source>
        <dbReference type="HAMAP-Rule" id="MF_01321"/>
    </source>
</evidence>
<proteinExistence type="inferred from homology"/>
<comment type="function">
    <text evidence="1">DNA-dependent RNA polymerase catalyzes the transcription of DNA into RNA using the four ribonucleoside triphosphates as substrates.</text>
</comment>
<comment type="catalytic activity">
    <reaction evidence="1">
        <text>RNA(n) + a ribonucleoside 5'-triphosphate = RNA(n+1) + diphosphate</text>
        <dbReference type="Rhea" id="RHEA:21248"/>
        <dbReference type="Rhea" id="RHEA-COMP:14527"/>
        <dbReference type="Rhea" id="RHEA-COMP:17342"/>
        <dbReference type="ChEBI" id="CHEBI:33019"/>
        <dbReference type="ChEBI" id="CHEBI:61557"/>
        <dbReference type="ChEBI" id="CHEBI:140395"/>
        <dbReference type="EC" id="2.7.7.6"/>
    </reaction>
</comment>
<comment type="subunit">
    <text evidence="1">The RNAP catalytic core consists of 2 alpha, 1 beta, 1 beta' and 1 omega subunit. When a sigma factor is associated with the core the holoenzyme is formed, which can initiate transcription.</text>
</comment>
<comment type="similarity">
    <text evidence="1">Belongs to the RNA polymerase beta chain family.</text>
</comment>
<name>RPOB_RHOPT</name>
<feature type="chain" id="PRO_1000141728" description="DNA-directed RNA polymerase subunit beta">
    <location>
        <begin position="1"/>
        <end position="1374"/>
    </location>
</feature>
<accession>B3QC00</accession>
<reference key="1">
    <citation type="submission" date="2008-05" db="EMBL/GenBank/DDBJ databases">
        <title>Complete sequence of Rhodopseudomonas palustris TIE-1.</title>
        <authorList>
            <consortium name="US DOE Joint Genome Institute"/>
            <person name="Lucas S."/>
            <person name="Copeland A."/>
            <person name="Lapidus A."/>
            <person name="Glavina del Rio T."/>
            <person name="Dalin E."/>
            <person name="Tice H."/>
            <person name="Pitluck S."/>
            <person name="Chain P."/>
            <person name="Malfatti S."/>
            <person name="Shin M."/>
            <person name="Vergez L."/>
            <person name="Lang D."/>
            <person name="Schmutz J."/>
            <person name="Larimer F."/>
            <person name="Land M."/>
            <person name="Hauser L."/>
            <person name="Kyrpides N."/>
            <person name="Mikhailova N."/>
            <person name="Emerson D."/>
            <person name="Newman D.K."/>
            <person name="Roden E."/>
            <person name="Richardson P."/>
        </authorList>
    </citation>
    <scope>NUCLEOTIDE SEQUENCE [LARGE SCALE GENOMIC DNA]</scope>
    <source>
        <strain>TIE-1</strain>
    </source>
</reference>
<sequence length="1374" mass="153599">MAQQTFTGRKRVRKFFGHIREVAEMPNLIEVQKASYDQFLMVAEPPGGRPDEGLQAVFRSVFPISDFSNASMLEFVRYEFEPPKYDVDECRQRGMTYAAPLKVTLRLIVFDIDEETGARSVKDIKEQDVYMGDIPLMTMNGTFIVNGTERVIVSQMHRSPGVFFDHDKGKTHSSGKLLFAARIIPYRGSWLDIEFDAKDIVYARIDRRRKLPVTSLMFALGLDGEEILSTFYNKILYKRTKEGWRVPFDVNRFRGYSTVNDLIDADTGKVVLEAGKKLTVRAARQLQEKGLKALRMSDEELVGNYLAEDLVNPKTGEIYAEAGEEITDKTLKMLNEQGYKELPLLDIDHVNVGPYIRNTLNADKNMTREDALFDIYRVMRPGEPPTLDSAQNMFQSLFFDAERYDLSAVGRVKMNMRLDLDAPDTHRTLRKEDILAVIKTLVGLRDGKGEIDDIDHLGNRRVRSVGELMENQYRIGLLRMERAIKERMSSVDIDTVMPQDLINAKPAAAAVREFFGSSQLSQFMDQTNPLSEITHKRRLSALGPGGLTRERAGFEVRDVHPTHYGRICPIETPEGPNIGLINSLATFARVNKYGFVETPYRKVKEGRVTDEVVYLSAMEEGRYAVAQANVSLDAKGKFTDDLVVCRAGGTRDVVPMPADQVDYMDVSPKQLVSVAAALIPFLENDDANRALMGSNMQRQAVPLVRAEAPFVGTGMEGVVARDSGAAIAARRTGIIDQIDATRIVIRATEDLDPTKSGVDIYRLMKYQRSNQSTCINQRPLVKVGDHVKKGDIIADGPSTDLGELALGRNVLVAFMPWNGYNFEDSILLSERIVKEDVFTSIHIEEFEVMARDTKLGPEEITRDIPNVSEEALKNLDEAGIVYIGAEVRAGDILVGKITPKGESPMTPEEKLLRAIFGEKASDVRDTSLRVPPGVQGTIVEVRVFNRHGVDKDERALAIEREEIERLAKDRDDEQAILDRNVYGRLADLLDGRQGIAGPKGFKKDTKITRAVLEEYPKSQWWLFAAPNDKLMAEIEAMRKQYDESKKGLEQRFLDKVEKLQRGDELPPGVMKMVKVFVAVKRKIQPGDKMAGRHGNKGVVSKIVPIEDMPFLEDGTHADIVLNPLGVPSRMNVGQILETHLGWACAGLGKRIGETIDAYYQSQDLKPLRETLRKIYGEDETIKSLDDGELLELGRNLSHGVPIATPVFDGAKEADIEEMLKLAGFDASGQSTVYDGRTGDQFDRRVTVGYIYMLKLHHLVDDKIHARSIGPYSLVTQQPLGGKAQFGGQRFGEMEVWALEAYGAAYTLQEMLTVKSDDVAGRTKVYEAIVRGDDTFEAGIPESFNVLVKEMRSLGLNVDLHNSKLAAPPPAEAAE</sequence>
<gene>
    <name evidence="1" type="primary">rpoB</name>
    <name type="ordered locus">Rpal_3687</name>
</gene>
<dbReference type="EC" id="2.7.7.6" evidence="1"/>
<dbReference type="EMBL" id="CP001096">
    <property type="protein sequence ID" value="ACF02187.1"/>
    <property type="molecule type" value="Genomic_DNA"/>
</dbReference>
<dbReference type="RefSeq" id="WP_011158811.1">
    <property type="nucleotide sequence ID" value="NC_011004.1"/>
</dbReference>
<dbReference type="SMR" id="B3QC00"/>
<dbReference type="GeneID" id="66894354"/>
<dbReference type="KEGG" id="rpt:Rpal_3687"/>
<dbReference type="HOGENOM" id="CLU_000524_4_0_5"/>
<dbReference type="OrthoDB" id="9803954at2"/>
<dbReference type="Proteomes" id="UP000001725">
    <property type="component" value="Chromosome"/>
</dbReference>
<dbReference type="GO" id="GO:0000428">
    <property type="term" value="C:DNA-directed RNA polymerase complex"/>
    <property type="evidence" value="ECO:0007669"/>
    <property type="project" value="UniProtKB-KW"/>
</dbReference>
<dbReference type="GO" id="GO:0003677">
    <property type="term" value="F:DNA binding"/>
    <property type="evidence" value="ECO:0007669"/>
    <property type="project" value="UniProtKB-UniRule"/>
</dbReference>
<dbReference type="GO" id="GO:0003899">
    <property type="term" value="F:DNA-directed RNA polymerase activity"/>
    <property type="evidence" value="ECO:0007669"/>
    <property type="project" value="UniProtKB-UniRule"/>
</dbReference>
<dbReference type="GO" id="GO:0032549">
    <property type="term" value="F:ribonucleoside binding"/>
    <property type="evidence" value="ECO:0007669"/>
    <property type="project" value="InterPro"/>
</dbReference>
<dbReference type="GO" id="GO:0006351">
    <property type="term" value="P:DNA-templated transcription"/>
    <property type="evidence" value="ECO:0007669"/>
    <property type="project" value="UniProtKB-UniRule"/>
</dbReference>
<dbReference type="CDD" id="cd00653">
    <property type="entry name" value="RNA_pol_B_RPB2"/>
    <property type="match status" value="1"/>
</dbReference>
<dbReference type="FunFam" id="2.40.50.100:FF:000006">
    <property type="entry name" value="DNA-directed RNA polymerase subunit beta"/>
    <property type="match status" value="1"/>
</dbReference>
<dbReference type="FunFam" id="3.90.1800.10:FF:000001">
    <property type="entry name" value="DNA-directed RNA polymerase subunit beta"/>
    <property type="match status" value="1"/>
</dbReference>
<dbReference type="Gene3D" id="2.40.50.100">
    <property type="match status" value="1"/>
</dbReference>
<dbReference type="Gene3D" id="2.40.50.150">
    <property type="match status" value="1"/>
</dbReference>
<dbReference type="Gene3D" id="3.90.1100.10">
    <property type="match status" value="2"/>
</dbReference>
<dbReference type="Gene3D" id="2.30.150.10">
    <property type="entry name" value="DNA-directed RNA polymerase, beta subunit, external 1 domain"/>
    <property type="match status" value="1"/>
</dbReference>
<dbReference type="Gene3D" id="2.40.270.10">
    <property type="entry name" value="DNA-directed RNA polymerase, subunit 2, domain 6"/>
    <property type="match status" value="1"/>
</dbReference>
<dbReference type="Gene3D" id="3.90.1800.10">
    <property type="entry name" value="RNA polymerase alpha subunit dimerisation domain"/>
    <property type="match status" value="1"/>
</dbReference>
<dbReference type="Gene3D" id="3.90.1110.10">
    <property type="entry name" value="RNA polymerase Rpb2, domain 2"/>
    <property type="match status" value="1"/>
</dbReference>
<dbReference type="HAMAP" id="MF_01321">
    <property type="entry name" value="RNApol_bact_RpoB"/>
    <property type="match status" value="1"/>
</dbReference>
<dbReference type="InterPro" id="IPR042107">
    <property type="entry name" value="DNA-dir_RNA_pol_bsu_ext_1_sf"/>
</dbReference>
<dbReference type="InterPro" id="IPR019462">
    <property type="entry name" value="DNA-dir_RNA_pol_bsu_external_1"/>
</dbReference>
<dbReference type="InterPro" id="IPR015712">
    <property type="entry name" value="DNA-dir_RNA_pol_su2"/>
</dbReference>
<dbReference type="InterPro" id="IPR007120">
    <property type="entry name" value="DNA-dir_RNAP_su2_dom"/>
</dbReference>
<dbReference type="InterPro" id="IPR037033">
    <property type="entry name" value="DNA-dir_RNAP_su2_hyb_sf"/>
</dbReference>
<dbReference type="InterPro" id="IPR010243">
    <property type="entry name" value="RNA_pol_bsu_bac"/>
</dbReference>
<dbReference type="InterPro" id="IPR007121">
    <property type="entry name" value="RNA_pol_bsu_CS"/>
</dbReference>
<dbReference type="InterPro" id="IPR007644">
    <property type="entry name" value="RNA_pol_bsu_protrusion"/>
</dbReference>
<dbReference type="InterPro" id="IPR007642">
    <property type="entry name" value="RNA_pol_Rpb2_2"/>
</dbReference>
<dbReference type="InterPro" id="IPR037034">
    <property type="entry name" value="RNA_pol_Rpb2_2_sf"/>
</dbReference>
<dbReference type="InterPro" id="IPR007645">
    <property type="entry name" value="RNA_pol_Rpb2_3"/>
</dbReference>
<dbReference type="InterPro" id="IPR007641">
    <property type="entry name" value="RNA_pol_Rpb2_7"/>
</dbReference>
<dbReference type="InterPro" id="IPR014724">
    <property type="entry name" value="RNA_pol_RPB2_OB-fold"/>
</dbReference>
<dbReference type="NCBIfam" id="NF001616">
    <property type="entry name" value="PRK00405.1"/>
    <property type="match status" value="1"/>
</dbReference>
<dbReference type="NCBIfam" id="TIGR02013">
    <property type="entry name" value="rpoB"/>
    <property type="match status" value="1"/>
</dbReference>
<dbReference type="PANTHER" id="PTHR20856">
    <property type="entry name" value="DNA-DIRECTED RNA POLYMERASE I SUBUNIT 2"/>
    <property type="match status" value="1"/>
</dbReference>
<dbReference type="Pfam" id="PF04563">
    <property type="entry name" value="RNA_pol_Rpb2_1"/>
    <property type="match status" value="1"/>
</dbReference>
<dbReference type="Pfam" id="PF04561">
    <property type="entry name" value="RNA_pol_Rpb2_2"/>
    <property type="match status" value="2"/>
</dbReference>
<dbReference type="Pfam" id="PF04565">
    <property type="entry name" value="RNA_pol_Rpb2_3"/>
    <property type="match status" value="1"/>
</dbReference>
<dbReference type="Pfam" id="PF10385">
    <property type="entry name" value="RNA_pol_Rpb2_45"/>
    <property type="match status" value="1"/>
</dbReference>
<dbReference type="Pfam" id="PF00562">
    <property type="entry name" value="RNA_pol_Rpb2_6"/>
    <property type="match status" value="1"/>
</dbReference>
<dbReference type="Pfam" id="PF04560">
    <property type="entry name" value="RNA_pol_Rpb2_7"/>
    <property type="match status" value="1"/>
</dbReference>
<dbReference type="SUPFAM" id="SSF64484">
    <property type="entry name" value="beta and beta-prime subunits of DNA dependent RNA-polymerase"/>
    <property type="match status" value="1"/>
</dbReference>
<dbReference type="PROSITE" id="PS01166">
    <property type="entry name" value="RNA_POL_BETA"/>
    <property type="match status" value="1"/>
</dbReference>
<keyword id="KW-0240">DNA-directed RNA polymerase</keyword>
<keyword id="KW-0548">Nucleotidyltransferase</keyword>
<keyword id="KW-0804">Transcription</keyword>
<keyword id="KW-0808">Transferase</keyword>
<protein>
    <recommendedName>
        <fullName evidence="1">DNA-directed RNA polymerase subunit beta</fullName>
        <shortName evidence="1">RNAP subunit beta</shortName>
        <ecNumber evidence="1">2.7.7.6</ecNumber>
    </recommendedName>
    <alternativeName>
        <fullName evidence="1">RNA polymerase subunit beta</fullName>
    </alternativeName>
    <alternativeName>
        <fullName evidence="1">Transcriptase subunit beta</fullName>
    </alternativeName>
</protein>